<feature type="chain" id="PRO_0000409164" description="Monopolar spindle protein 2">
    <location>
        <begin position="1"/>
        <end position="387"/>
    </location>
</feature>
<feature type="transmembrane region" description="Helical" evidence="2">
    <location>
        <begin position="311"/>
        <end position="327"/>
    </location>
</feature>
<feature type="region of interest" description="Disordered" evidence="3">
    <location>
        <begin position="216"/>
        <end position="235"/>
    </location>
</feature>
<feature type="coiled-coil region" evidence="2">
    <location>
        <begin position="157"/>
        <end position="269"/>
    </location>
</feature>
<feature type="compositionally biased region" description="Polar residues" evidence="3">
    <location>
        <begin position="220"/>
        <end position="230"/>
    </location>
</feature>
<evidence type="ECO:0000250" key="1"/>
<evidence type="ECO:0000255" key="2"/>
<evidence type="ECO:0000256" key="3">
    <source>
        <dbReference type="SAM" id="MobiDB-lite"/>
    </source>
</evidence>
<evidence type="ECO:0000305" key="4"/>
<organism>
    <name type="scientific">Saccharomyces cerevisiae (strain FostersB)</name>
    <name type="common">Baker's yeast</name>
    <dbReference type="NCBI Taxonomy" id="764102"/>
    <lineage>
        <taxon>Eukaryota</taxon>
        <taxon>Fungi</taxon>
        <taxon>Dikarya</taxon>
        <taxon>Ascomycota</taxon>
        <taxon>Saccharomycotina</taxon>
        <taxon>Saccharomycetes</taxon>
        <taxon>Saccharomycetales</taxon>
        <taxon>Saccharomycetaceae</taxon>
        <taxon>Saccharomyces</taxon>
    </lineage>
</organism>
<protein>
    <recommendedName>
        <fullName>Monopolar spindle protein 2</fullName>
    </recommendedName>
</protein>
<dbReference type="EMBL" id="AEHH01000023">
    <property type="protein sequence ID" value="EGA58781.1"/>
    <property type="molecule type" value="Genomic_DNA"/>
</dbReference>
<dbReference type="SMR" id="E7Q3U9"/>
<dbReference type="HOGENOM" id="CLU_069890_0_0_1"/>
<dbReference type="OrthoDB" id="4035046at2759"/>
<dbReference type="GO" id="GO:0005737">
    <property type="term" value="C:cytoplasm"/>
    <property type="evidence" value="ECO:0007669"/>
    <property type="project" value="UniProtKB-KW"/>
</dbReference>
<dbReference type="GO" id="GO:0031965">
    <property type="term" value="C:nuclear membrane"/>
    <property type="evidence" value="ECO:0007669"/>
    <property type="project" value="UniProtKB-SubCell"/>
</dbReference>
<dbReference type="GO" id="GO:0005816">
    <property type="term" value="C:spindle pole body"/>
    <property type="evidence" value="ECO:0007669"/>
    <property type="project" value="UniProtKB-SubCell"/>
</dbReference>
<dbReference type="GO" id="GO:0071988">
    <property type="term" value="P:protein localization to spindle pole body"/>
    <property type="evidence" value="ECO:0007669"/>
    <property type="project" value="InterPro"/>
</dbReference>
<dbReference type="GO" id="GO:0030474">
    <property type="term" value="P:spindle pole body duplication"/>
    <property type="evidence" value="ECO:0007669"/>
    <property type="project" value="InterPro"/>
</dbReference>
<dbReference type="InterPro" id="IPR031433">
    <property type="entry name" value="Mps2"/>
</dbReference>
<dbReference type="Pfam" id="PF17060">
    <property type="entry name" value="MPS2"/>
    <property type="match status" value="1"/>
</dbReference>
<proteinExistence type="inferred from homology"/>
<accession>E7Q3U9</accession>
<gene>
    <name type="primary">MPS2</name>
    <name type="synonym">MMC1</name>
    <name type="ORF">FOSTERSB_1696</name>
</gene>
<comment type="function">
    <text evidence="1">Component of the spindle pole body (SPB) required for insertion of the nascent SPB into the nuclear envelope and for the proper execution of spindle pole body (SPB) duplication.</text>
</comment>
<comment type="subunit">
    <text evidence="1">Interacts with BBP1, MPS3, and SPC24.</text>
</comment>
<comment type="subcellular location">
    <subcellularLocation>
        <location evidence="1">Nucleus membrane</location>
        <topology evidence="1">Single-pass membrane protein</topology>
    </subcellularLocation>
    <subcellularLocation>
        <location evidence="1">Cytoplasm</location>
        <location evidence="1">Cytoskeleton</location>
        <location evidence="1">Microtubule organizing center</location>
        <location evidence="1">Spindle pole body</location>
    </subcellularLocation>
</comment>
<comment type="similarity">
    <text evidence="4">Belongs to the MPS2 family.</text>
</comment>
<name>MPS2_YEASB</name>
<keyword id="KW-0175">Coiled coil</keyword>
<keyword id="KW-0963">Cytoplasm</keyword>
<keyword id="KW-0206">Cytoskeleton</keyword>
<keyword id="KW-0472">Membrane</keyword>
<keyword id="KW-0539">Nucleus</keyword>
<keyword id="KW-0812">Transmembrane</keyword>
<keyword id="KW-1133">Transmembrane helix</keyword>
<sequence length="387" mass="44600">MSNGAFDAIFEYAWGQIDKPISGDFIYGKDLPKLIEIIENIFQKAQKSGSYELRLPLFSEINKDLFRTFSNTKTFFKIHKEEFDDIFFNLVNHPLREILENAFIGVDSIPSDFIVSMNLNSPSKFLVENKNKNTEGAGISTPRKKLTESPIKLLSRKNIGKALEVQVEELKRELTAKQSLLQENERQVSELKIRLETYQEKYASIQQRFSDLQKARQVEDNQNSSRTSDPGSPLVTGIDQKAILEEFRRRLQRQTDTISFLKDQIRRERGLNCSNDKVSHSKRKHATTDGDGTFKNFISAVPSNIWVKATIRIIVCFALLAGVLPYIRKYVYAHDTPSQNSRLQLSWWENSGILSKIVWFFEDQTDLETEYRSNANVDDAYSRVFGI</sequence>
<reference key="1">
    <citation type="journal article" date="2011" name="PLoS Genet.">
        <title>Whole-genome comparison reveals novel genetic elements that characterize the genome of industrial strains of Saccharomyces cerevisiae.</title>
        <authorList>
            <person name="Borneman A.R."/>
            <person name="Desany B.A."/>
            <person name="Riches D."/>
            <person name="Affourtit J.P."/>
            <person name="Forgan A.H."/>
            <person name="Pretorius I.S."/>
            <person name="Egholm M."/>
            <person name="Chambers P.J."/>
        </authorList>
    </citation>
    <scope>NUCLEOTIDE SEQUENCE [LARGE SCALE GENOMIC DNA]</scope>
    <source>
        <strain>FostersB</strain>
    </source>
</reference>